<sequence length="358" mass="39094">MKILVVDDSALMRTTISDILQNIPNAEIKTARDGMDAIDKVMKWQPDVMTLDINMPNMDGLTCLTQIMVERPLPIVMLSSLTHEGAITTLEALYLGAVDFVAKPGGTICGRLQEVAPLIREKVRAAAKMRVKVHTQLSVSPAEVEHKHKSPVVENNEDHQLAIMGVSTGGPGTVETILRHLPADFSLPIIVNQHMPESFTAAFAQRLNRHLQQPVKEINRALVLEAGTVYVCKGDRDCIVTLRDGKLAAMPTPNDSHFSWHPSVSKLVASAIRTCGEDNLLCVMLTGMGDDGATEMAQVAQGNGIVFAQEPTTCVVPSMPEALLKRVPHIPTGTPEHLAYLMTEVVRQSSRELHYGNH</sequence>
<keyword id="KW-0145">Chemotaxis</keyword>
<keyword id="KW-0963">Cytoplasm</keyword>
<keyword id="KW-0378">Hydrolase</keyword>
<keyword id="KW-0597">Phosphoprotein</keyword>
<keyword id="KW-1185">Reference proteome</keyword>
<protein>
    <recommendedName>
        <fullName evidence="1">Protein-glutamate methylesterase/protein-glutamine glutaminase 3</fullName>
        <ecNumber evidence="1">3.1.1.61</ecNumber>
        <ecNumber evidence="1">3.5.1.44</ecNumber>
    </recommendedName>
</protein>
<proteinExistence type="inferred from homology"/>
<name>CHEB3_VIBCH</name>
<reference key="1">
    <citation type="journal article" date="2000" name="Nature">
        <title>DNA sequence of both chromosomes of the cholera pathogen Vibrio cholerae.</title>
        <authorList>
            <person name="Heidelberg J.F."/>
            <person name="Eisen J.A."/>
            <person name="Nelson W.C."/>
            <person name="Clayton R.A."/>
            <person name="Gwinn M.L."/>
            <person name="Dodson R.J."/>
            <person name="Haft D.H."/>
            <person name="Hickey E.K."/>
            <person name="Peterson J.D."/>
            <person name="Umayam L.A."/>
            <person name="Gill S.R."/>
            <person name="Nelson K.E."/>
            <person name="Read T.D."/>
            <person name="Tettelin H."/>
            <person name="Richardson D.L."/>
            <person name="Ermolaeva M.D."/>
            <person name="Vamathevan J.J."/>
            <person name="Bass S."/>
            <person name="Qin H."/>
            <person name="Dragoi I."/>
            <person name="Sellers P."/>
            <person name="McDonald L.A."/>
            <person name="Utterback T.R."/>
            <person name="Fleischmann R.D."/>
            <person name="Nierman W.C."/>
            <person name="White O."/>
            <person name="Salzberg S.L."/>
            <person name="Smith H.O."/>
            <person name="Colwell R.R."/>
            <person name="Mekalanos J.J."/>
            <person name="Venter J.C."/>
            <person name="Fraser C.M."/>
        </authorList>
    </citation>
    <scope>NUCLEOTIDE SEQUENCE [LARGE SCALE GENOMIC DNA]</scope>
    <source>
        <strain>ATCC 39315 / El Tor Inaba N16961</strain>
    </source>
</reference>
<comment type="function">
    <text evidence="1">Involved in chemotaxis. Part of a chemotaxis signal transduction system that modulates chemotaxis in response to various stimuli. Catalyzes the demethylation of specific methylglutamate residues introduced into the chemoreceptors (methyl-accepting chemotaxis proteins or MCP) by CheR. Also mediates the irreversible deamidation of specific glutamine residues to glutamic acid.</text>
</comment>
<comment type="catalytic activity">
    <reaction evidence="1">
        <text>[protein]-L-glutamate 5-O-methyl ester + H2O = L-glutamyl-[protein] + methanol + H(+)</text>
        <dbReference type="Rhea" id="RHEA:23236"/>
        <dbReference type="Rhea" id="RHEA-COMP:10208"/>
        <dbReference type="Rhea" id="RHEA-COMP:10311"/>
        <dbReference type="ChEBI" id="CHEBI:15377"/>
        <dbReference type="ChEBI" id="CHEBI:15378"/>
        <dbReference type="ChEBI" id="CHEBI:17790"/>
        <dbReference type="ChEBI" id="CHEBI:29973"/>
        <dbReference type="ChEBI" id="CHEBI:82795"/>
        <dbReference type="EC" id="3.1.1.61"/>
    </reaction>
</comment>
<comment type="catalytic activity">
    <reaction evidence="1">
        <text>L-glutaminyl-[protein] + H2O = L-glutamyl-[protein] + NH4(+)</text>
        <dbReference type="Rhea" id="RHEA:16441"/>
        <dbReference type="Rhea" id="RHEA-COMP:10207"/>
        <dbReference type="Rhea" id="RHEA-COMP:10208"/>
        <dbReference type="ChEBI" id="CHEBI:15377"/>
        <dbReference type="ChEBI" id="CHEBI:28938"/>
        <dbReference type="ChEBI" id="CHEBI:29973"/>
        <dbReference type="ChEBI" id="CHEBI:30011"/>
        <dbReference type="EC" id="3.5.1.44"/>
    </reaction>
</comment>
<comment type="subcellular location">
    <subcellularLocation>
        <location evidence="1">Cytoplasm</location>
    </subcellularLocation>
</comment>
<comment type="domain">
    <text evidence="1">Contains a C-terminal catalytic domain, and an N-terminal region which modulates catalytic activity.</text>
</comment>
<comment type="PTM">
    <text evidence="1">Phosphorylated by CheA. Phosphorylation of the N-terminal regulatory domain activates the methylesterase activity.</text>
</comment>
<comment type="miscellaneous">
    <text>In V.cholerae cheB2 is a pseudogene.</text>
</comment>
<comment type="similarity">
    <text evidence="1">Belongs to the CheB family.</text>
</comment>
<dbReference type="EC" id="3.1.1.61" evidence="1"/>
<dbReference type="EC" id="3.5.1.44" evidence="1"/>
<dbReference type="EMBL" id="AE003852">
    <property type="protein sequence ID" value="AAF94558.1"/>
    <property type="molecule type" value="Genomic_DNA"/>
</dbReference>
<dbReference type="PIR" id="A82206">
    <property type="entry name" value="A82206"/>
</dbReference>
<dbReference type="RefSeq" id="NP_231044.1">
    <property type="nucleotide sequence ID" value="NC_002505.1"/>
</dbReference>
<dbReference type="RefSeq" id="WP_000699594.1">
    <property type="nucleotide sequence ID" value="NZ_LT906614.1"/>
</dbReference>
<dbReference type="SMR" id="Q9KS59"/>
<dbReference type="STRING" id="243277.VC_1401"/>
<dbReference type="DNASU" id="2614033"/>
<dbReference type="EnsemblBacteria" id="AAF94558">
    <property type="protein sequence ID" value="AAF94558"/>
    <property type="gene ID" value="VC_1401"/>
</dbReference>
<dbReference type="KEGG" id="vch:VC_1401"/>
<dbReference type="PATRIC" id="fig|243277.26.peg.1332"/>
<dbReference type="eggNOG" id="COG2201">
    <property type="taxonomic scope" value="Bacteria"/>
</dbReference>
<dbReference type="HOGENOM" id="CLU_000445_51_0_6"/>
<dbReference type="Proteomes" id="UP000000584">
    <property type="component" value="Chromosome 1"/>
</dbReference>
<dbReference type="GO" id="GO:0005737">
    <property type="term" value="C:cytoplasm"/>
    <property type="evidence" value="ECO:0007669"/>
    <property type="project" value="UniProtKB-SubCell"/>
</dbReference>
<dbReference type="GO" id="GO:0000156">
    <property type="term" value="F:phosphorelay response regulator activity"/>
    <property type="evidence" value="ECO:0007669"/>
    <property type="project" value="InterPro"/>
</dbReference>
<dbReference type="GO" id="GO:0008984">
    <property type="term" value="F:protein-glutamate methylesterase activity"/>
    <property type="evidence" value="ECO:0007669"/>
    <property type="project" value="UniProtKB-UniRule"/>
</dbReference>
<dbReference type="GO" id="GO:0050568">
    <property type="term" value="F:protein-glutamine glutaminase activity"/>
    <property type="evidence" value="ECO:0007669"/>
    <property type="project" value="UniProtKB-UniRule"/>
</dbReference>
<dbReference type="GO" id="GO:0006935">
    <property type="term" value="P:chemotaxis"/>
    <property type="evidence" value="ECO:0007669"/>
    <property type="project" value="UniProtKB-UniRule"/>
</dbReference>
<dbReference type="CDD" id="cd16432">
    <property type="entry name" value="CheB_Rec"/>
    <property type="match status" value="1"/>
</dbReference>
<dbReference type="CDD" id="cd17541">
    <property type="entry name" value="REC_CheB-like"/>
    <property type="match status" value="1"/>
</dbReference>
<dbReference type="FunFam" id="3.40.50.2300:FF:000077">
    <property type="entry name" value="Chemotaxis response regulator"/>
    <property type="match status" value="1"/>
</dbReference>
<dbReference type="FunFam" id="3.40.50.180:FF:000002">
    <property type="entry name" value="Protein-glutamate methylesterase/protein-glutamine glutaminase"/>
    <property type="match status" value="1"/>
</dbReference>
<dbReference type="Gene3D" id="3.40.50.2300">
    <property type="match status" value="1"/>
</dbReference>
<dbReference type="Gene3D" id="3.40.50.180">
    <property type="entry name" value="Methylesterase CheB, C-terminal domain"/>
    <property type="match status" value="1"/>
</dbReference>
<dbReference type="HAMAP" id="MF_00099">
    <property type="entry name" value="CheB_chemtxs"/>
    <property type="match status" value="1"/>
</dbReference>
<dbReference type="InterPro" id="IPR008248">
    <property type="entry name" value="CheB-like"/>
</dbReference>
<dbReference type="InterPro" id="IPR035909">
    <property type="entry name" value="CheB_C"/>
</dbReference>
<dbReference type="InterPro" id="IPR011006">
    <property type="entry name" value="CheY-like_superfamily"/>
</dbReference>
<dbReference type="InterPro" id="IPR000673">
    <property type="entry name" value="Sig_transdc_resp-reg_Me-estase"/>
</dbReference>
<dbReference type="InterPro" id="IPR001789">
    <property type="entry name" value="Sig_transdc_resp-reg_receiver"/>
</dbReference>
<dbReference type="NCBIfam" id="NF001965">
    <property type="entry name" value="PRK00742.1"/>
    <property type="match status" value="1"/>
</dbReference>
<dbReference type="PANTHER" id="PTHR42872">
    <property type="entry name" value="PROTEIN-GLUTAMATE METHYLESTERASE/PROTEIN-GLUTAMINE GLUTAMINASE"/>
    <property type="match status" value="1"/>
</dbReference>
<dbReference type="PANTHER" id="PTHR42872:SF6">
    <property type="entry name" value="PROTEIN-GLUTAMATE METHYLESTERASE_PROTEIN-GLUTAMINE GLUTAMINASE"/>
    <property type="match status" value="1"/>
</dbReference>
<dbReference type="Pfam" id="PF01339">
    <property type="entry name" value="CheB_methylest"/>
    <property type="match status" value="1"/>
</dbReference>
<dbReference type="Pfam" id="PF00072">
    <property type="entry name" value="Response_reg"/>
    <property type="match status" value="1"/>
</dbReference>
<dbReference type="PIRSF" id="PIRSF000876">
    <property type="entry name" value="RR_chemtxs_CheB"/>
    <property type="match status" value="1"/>
</dbReference>
<dbReference type="SMART" id="SM00448">
    <property type="entry name" value="REC"/>
    <property type="match status" value="1"/>
</dbReference>
<dbReference type="SUPFAM" id="SSF52172">
    <property type="entry name" value="CheY-like"/>
    <property type="match status" value="1"/>
</dbReference>
<dbReference type="SUPFAM" id="SSF52738">
    <property type="entry name" value="Methylesterase CheB, C-terminal domain"/>
    <property type="match status" value="1"/>
</dbReference>
<dbReference type="PROSITE" id="PS50122">
    <property type="entry name" value="CHEB"/>
    <property type="match status" value="1"/>
</dbReference>
<dbReference type="PROSITE" id="PS50110">
    <property type="entry name" value="RESPONSE_REGULATORY"/>
    <property type="match status" value="1"/>
</dbReference>
<feature type="chain" id="PRO_0000158037" description="Protein-glutamate methylesterase/protein-glutamine glutaminase 3">
    <location>
        <begin position="1"/>
        <end position="358"/>
    </location>
</feature>
<feature type="domain" description="Response regulatory" evidence="1">
    <location>
        <begin position="2"/>
        <end position="118"/>
    </location>
</feature>
<feature type="domain" description="CheB-type methylesterase" evidence="1">
    <location>
        <begin position="155"/>
        <end position="325"/>
    </location>
</feature>
<feature type="active site" evidence="1">
    <location>
        <position position="167"/>
    </location>
</feature>
<feature type="active site" evidence="1">
    <location>
        <position position="194"/>
    </location>
</feature>
<feature type="active site" evidence="1">
    <location>
        <position position="291"/>
    </location>
</feature>
<feature type="modified residue" description="4-aspartylphosphate" evidence="1">
    <location>
        <position position="52"/>
    </location>
</feature>
<evidence type="ECO:0000255" key="1">
    <source>
        <dbReference type="HAMAP-Rule" id="MF_00099"/>
    </source>
</evidence>
<accession>Q9KS59</accession>
<organism>
    <name type="scientific">Vibrio cholerae serotype O1 (strain ATCC 39315 / El Tor Inaba N16961)</name>
    <dbReference type="NCBI Taxonomy" id="243277"/>
    <lineage>
        <taxon>Bacteria</taxon>
        <taxon>Pseudomonadati</taxon>
        <taxon>Pseudomonadota</taxon>
        <taxon>Gammaproteobacteria</taxon>
        <taxon>Vibrionales</taxon>
        <taxon>Vibrionaceae</taxon>
        <taxon>Vibrio</taxon>
    </lineage>
</organism>
<gene>
    <name evidence="1" type="primary">cheB3</name>
    <name type="ordered locus">VC_1401</name>
</gene>